<reference key="1">
    <citation type="journal article" date="1990" name="J. Biol. Chem.">
        <title>Characterization of fetal porcine bone sialoproteins, secreted phosphoprotein I (SPPI, osteopontin), bone sialoprotein, and a 23-kDa glycoprotein. Demonstration that the 23-kDa glycoprotein is derived from the carboxyl terminus of SPPI.</title>
        <authorList>
            <person name="Zhang Q."/>
            <person name="Domenicucci C."/>
            <person name="Goldberg H.A."/>
            <person name="Wrana J.L."/>
            <person name="Sodek J."/>
        </authorList>
    </citation>
    <scope>PROTEIN SEQUENCE OF 1-20</scope>
    <source>
        <tissue>Bone</tissue>
    </source>
</reference>
<reference key="2">
    <citation type="journal article" date="1993" name="Matrix">
        <title>Characterization of porcine bone sialoprotein: primary structure and cellular expression.</title>
        <authorList>
            <person name="Shapiro H.S."/>
            <person name="Chen J."/>
            <person name="Wrana J.L."/>
            <person name="Zhang Q."/>
            <person name="Blum M."/>
            <person name="Sodek J."/>
        </authorList>
    </citation>
    <scope>NUCLEOTIDE SEQUENCE [MRNA] OF 21-300</scope>
</reference>
<evidence type="ECO:0000250" key="1">
    <source>
        <dbReference type="UniProtKB" id="P21815"/>
    </source>
</evidence>
<evidence type="ECO:0000250" key="2">
    <source>
        <dbReference type="UniProtKB" id="Q28862"/>
    </source>
</evidence>
<evidence type="ECO:0000255" key="3"/>
<evidence type="ECO:0000256" key="4">
    <source>
        <dbReference type="SAM" id="MobiDB-lite"/>
    </source>
</evidence>
<evidence type="ECO:0000305" key="5"/>
<protein>
    <recommendedName>
        <fullName evidence="5">Integrin-binding sialoprotein</fullName>
    </recommendedName>
    <alternativeName>
        <fullName evidence="5">Bone sialoprotein 2</fullName>
    </alternativeName>
    <alternativeName>
        <fullName>Bone sialoprotein II</fullName>
        <shortName>BSP II</shortName>
    </alternativeName>
    <alternativeName>
        <fullName>Cell-binding sialoprotein</fullName>
    </alternativeName>
</protein>
<accession>P31936</accession>
<proteinExistence type="evidence at protein level"/>
<organism>
    <name type="scientific">Sus scrofa</name>
    <name type="common">Pig</name>
    <dbReference type="NCBI Taxonomy" id="9823"/>
    <lineage>
        <taxon>Eukaryota</taxon>
        <taxon>Metazoa</taxon>
        <taxon>Chordata</taxon>
        <taxon>Craniata</taxon>
        <taxon>Vertebrata</taxon>
        <taxon>Euteleostomi</taxon>
        <taxon>Mammalia</taxon>
        <taxon>Eutheria</taxon>
        <taxon>Laurasiatheria</taxon>
        <taxon>Artiodactyla</taxon>
        <taxon>Suina</taxon>
        <taxon>Suidae</taxon>
        <taxon>Sus</taxon>
    </lineage>
</organism>
<comment type="function">
    <text evidence="1">Binds tightly to hydroxyapatite. Appears to form an integral part of the mineralized matrix. Probably important to cell-matrix interaction. Promotes adhesion and migration of various cells via the alpha-V/beta-3 integrin receptor (ITGAV:ITGB3).</text>
</comment>
<comment type="subunit">
    <text evidence="1 2">Monomer (By similarity). Interacts with integrins; the interaction promotes cell adhesion (By similarity).</text>
</comment>
<comment type="subcellular location">
    <subcellularLocation>
        <location evidence="1">Secreted</location>
    </subcellularLocation>
</comment>
<comment type="domain">
    <text evidence="1">The Arg-Gly-Asp (RGD) sequence serves as an integrin-binding motif and is required for integrin-mediated cell attachment.</text>
</comment>
<comment type="miscellaneous">
    <text>It is possible that the segments of clustered carboxyl groups mediate the strong binding to hydroxyapatite.</text>
</comment>
<feature type="chain" id="PRO_0000160609" description="Integrin-binding sialoprotein">
    <location>
        <begin position="1"/>
        <end position="300"/>
    </location>
</feature>
<feature type="region of interest" description="Disordered" evidence="4">
    <location>
        <begin position="41"/>
        <end position="258"/>
    </location>
</feature>
<feature type="short sequence motif" description="Integrin-binding motif" evidence="1">
    <location>
        <begin position="272"/>
        <end position="274"/>
    </location>
</feature>
<feature type="compositionally biased region" description="Low complexity" evidence="4">
    <location>
        <begin position="46"/>
        <end position="58"/>
    </location>
</feature>
<feature type="compositionally biased region" description="Acidic residues" evidence="4">
    <location>
        <begin position="59"/>
        <end position="92"/>
    </location>
</feature>
<feature type="compositionally biased region" description="Polar residues" evidence="4">
    <location>
        <begin position="93"/>
        <end position="102"/>
    </location>
</feature>
<feature type="compositionally biased region" description="Basic and acidic residues" evidence="4">
    <location>
        <begin position="125"/>
        <end position="136"/>
    </location>
</feature>
<feature type="compositionally biased region" description="Acidic residues" evidence="4">
    <location>
        <begin position="137"/>
        <end position="160"/>
    </location>
</feature>
<feature type="compositionally biased region" description="Polar residues" evidence="4">
    <location>
        <begin position="161"/>
        <end position="173"/>
    </location>
</feature>
<feature type="compositionally biased region" description="Polar residues" evidence="4">
    <location>
        <begin position="193"/>
        <end position="202"/>
    </location>
</feature>
<feature type="compositionally biased region" description="Polar residues" evidence="4">
    <location>
        <begin position="229"/>
        <end position="243"/>
    </location>
</feature>
<feature type="modified residue" description="Phosphoserine" evidence="2">
    <location>
        <position position="46"/>
    </location>
</feature>
<feature type="modified residue" description="Phosphoserine" evidence="2">
    <location>
        <position position="51"/>
    </location>
</feature>
<feature type="modified residue" description="Phosphoserine" evidence="2">
    <location>
        <position position="59"/>
    </location>
</feature>
<feature type="modified residue" description="Phosphoserine" evidence="2">
    <location>
        <position position="60"/>
    </location>
</feature>
<feature type="modified residue" description="Phosphoserine" evidence="2">
    <location>
        <position position="82"/>
    </location>
</feature>
<feature type="modified residue" description="Phosphoserine" evidence="2">
    <location>
        <position position="90"/>
    </location>
</feature>
<feature type="modified residue" description="Phosphoserine" evidence="2">
    <location>
        <position position="139"/>
    </location>
</feature>
<feature type="modified residue" description="Phosphoserine" evidence="2">
    <location>
        <position position="266"/>
    </location>
</feature>
<feature type="modified residue" description="Phosphoserine" evidence="2">
    <location>
        <position position="293"/>
    </location>
</feature>
<feature type="modified residue" description="Sulfotyrosine" evidence="1">
    <location>
        <position position="299"/>
    </location>
</feature>
<feature type="modified residue" description="Sulfotyrosine" evidence="1">
    <location>
        <position position="300"/>
    </location>
</feature>
<feature type="glycosylation site" description="N-linked (GlcNAc...) asparagine" evidence="3">
    <location>
        <position position="94"/>
    </location>
</feature>
<feature type="glycosylation site" description="N-linked (GlcNAc...) asparagine" evidence="3">
    <location>
        <position position="164"/>
    </location>
</feature>
<feature type="glycosylation site" description="N-linked (GlcNAc...) asparagine" evidence="3">
    <location>
        <position position="169"/>
    </location>
</feature>
<dbReference type="EMBL" id="L10363">
    <property type="protein sequence ID" value="AAA19822.1"/>
    <property type="molecule type" value="mRNA"/>
</dbReference>
<dbReference type="PIR" id="B35204">
    <property type="entry name" value="B35204"/>
</dbReference>
<dbReference type="PIR" id="S40032">
    <property type="entry name" value="S35103"/>
</dbReference>
<dbReference type="FunCoup" id="P31936">
    <property type="interactions" value="64"/>
</dbReference>
<dbReference type="STRING" id="9823.ENSSSCP00000029623"/>
<dbReference type="GlyCosmos" id="P31936">
    <property type="glycosylation" value="3 sites, No reported glycans"/>
</dbReference>
<dbReference type="GlyGen" id="P31936">
    <property type="glycosylation" value="5 sites"/>
</dbReference>
<dbReference type="PaxDb" id="9823-ENSSSCP00000029623"/>
<dbReference type="eggNOG" id="KOG1181">
    <property type="taxonomic scope" value="Eukaryota"/>
</dbReference>
<dbReference type="InParanoid" id="P31936"/>
<dbReference type="Proteomes" id="UP000008227">
    <property type="component" value="Unplaced"/>
</dbReference>
<dbReference type="Proteomes" id="UP000314985">
    <property type="component" value="Unplaced"/>
</dbReference>
<dbReference type="Proteomes" id="UP000694570">
    <property type="component" value="Unplaced"/>
</dbReference>
<dbReference type="Proteomes" id="UP000694571">
    <property type="component" value="Unplaced"/>
</dbReference>
<dbReference type="Proteomes" id="UP000694720">
    <property type="component" value="Unplaced"/>
</dbReference>
<dbReference type="Proteomes" id="UP000694722">
    <property type="component" value="Unplaced"/>
</dbReference>
<dbReference type="Proteomes" id="UP000694723">
    <property type="component" value="Unplaced"/>
</dbReference>
<dbReference type="Proteomes" id="UP000694724">
    <property type="component" value="Unplaced"/>
</dbReference>
<dbReference type="Proteomes" id="UP000694725">
    <property type="component" value="Unplaced"/>
</dbReference>
<dbReference type="Proteomes" id="UP000694726">
    <property type="component" value="Unplaced"/>
</dbReference>
<dbReference type="Proteomes" id="UP000694727">
    <property type="component" value="Unplaced"/>
</dbReference>
<dbReference type="Proteomes" id="UP000694728">
    <property type="component" value="Unplaced"/>
</dbReference>
<dbReference type="GO" id="GO:0005576">
    <property type="term" value="C:extracellular region"/>
    <property type="evidence" value="ECO:0007669"/>
    <property type="project" value="UniProtKB-SubCell"/>
</dbReference>
<dbReference type="GO" id="GO:0030282">
    <property type="term" value="P:bone mineralization"/>
    <property type="evidence" value="ECO:0000318"/>
    <property type="project" value="GO_Central"/>
</dbReference>
<dbReference type="GO" id="GO:0007155">
    <property type="term" value="P:cell adhesion"/>
    <property type="evidence" value="ECO:0007669"/>
    <property type="project" value="UniProtKB-KW"/>
</dbReference>
<dbReference type="GO" id="GO:0030198">
    <property type="term" value="P:extracellular matrix organization"/>
    <property type="evidence" value="ECO:0000318"/>
    <property type="project" value="GO_Central"/>
</dbReference>
<dbReference type="InterPro" id="IPR008412">
    <property type="entry name" value="IBSP"/>
</dbReference>
<dbReference type="PANTHER" id="PTHR10345">
    <property type="entry name" value="BONE SIALOPROTEIN 2"/>
    <property type="match status" value="1"/>
</dbReference>
<dbReference type="PANTHER" id="PTHR10345:SF0">
    <property type="entry name" value="BONE SIALOPROTEIN 2"/>
    <property type="match status" value="1"/>
</dbReference>
<dbReference type="Pfam" id="PF05432">
    <property type="entry name" value="BSP_II"/>
    <property type="match status" value="1"/>
</dbReference>
<sequence length="300" mass="33026">FSMKNFHRRAKLEDPEENGVFKYRPRYYLYKHAYFYPPLKRFPVQSSSDSSEENGNGDSSEEEEEEEENSNEEENNEENEDSDGNEDEDSEAENITLSTTTLGYGGDVTPGTASIGLAALQLPKKAGDIGKKSAKEEESDEDEEEEEENEENEAEVDDNEQGTNGTSTNSTEVDSGNGHSGGDNGEEGDQESVTEAQGTTVAGEQDNGGAKTTTSPNGGLEPTPPPQDISGTTLPPSGKTTTPEYEGEYEQTGAHEYDNGYEIYESENGEPRGDSYRAYEDEYSYYKGRSYNSYGGHDYY</sequence>
<keyword id="KW-0091">Biomineralization</keyword>
<keyword id="KW-0130">Cell adhesion</keyword>
<keyword id="KW-0903">Direct protein sequencing</keyword>
<keyword id="KW-0325">Glycoprotein</keyword>
<keyword id="KW-0597">Phosphoprotein</keyword>
<keyword id="KW-1185">Reference proteome</keyword>
<keyword id="KW-0964">Secreted</keyword>
<keyword id="KW-0730">Sialic acid</keyword>
<keyword id="KW-0765">Sulfation</keyword>
<name>SIAL_PIG</name>
<gene>
    <name type="primary">IBSP</name>
</gene>